<evidence type="ECO:0000255" key="1">
    <source>
        <dbReference type="HAMAP-Rule" id="MF_00046"/>
    </source>
</evidence>
<keyword id="KW-0067">ATP-binding</keyword>
<keyword id="KW-0131">Cell cycle</keyword>
<keyword id="KW-0132">Cell division</keyword>
<keyword id="KW-0133">Cell shape</keyword>
<keyword id="KW-0961">Cell wall biogenesis/degradation</keyword>
<keyword id="KW-0963">Cytoplasm</keyword>
<keyword id="KW-0436">Ligase</keyword>
<keyword id="KW-0547">Nucleotide-binding</keyword>
<keyword id="KW-0573">Peptidoglycan synthesis</keyword>
<keyword id="KW-1185">Reference proteome</keyword>
<organism>
    <name type="scientific">Paracoccus denitrificans (strain Pd 1222)</name>
    <dbReference type="NCBI Taxonomy" id="318586"/>
    <lineage>
        <taxon>Bacteria</taxon>
        <taxon>Pseudomonadati</taxon>
        <taxon>Pseudomonadota</taxon>
        <taxon>Alphaproteobacteria</taxon>
        <taxon>Rhodobacterales</taxon>
        <taxon>Paracoccaceae</taxon>
        <taxon>Paracoccus</taxon>
    </lineage>
</organism>
<feature type="chain" id="PRO_1000004382" description="UDP-N-acetylmuramate--L-alanine ligase">
    <location>
        <begin position="1"/>
        <end position="475"/>
    </location>
</feature>
<feature type="binding site" evidence="1">
    <location>
        <begin position="118"/>
        <end position="124"/>
    </location>
    <ligand>
        <name>ATP</name>
        <dbReference type="ChEBI" id="CHEBI:30616"/>
    </ligand>
</feature>
<dbReference type="EC" id="6.3.2.8" evidence="1"/>
<dbReference type="EMBL" id="CP000490">
    <property type="protein sequence ID" value="ABL72558.1"/>
    <property type="molecule type" value="Genomic_DNA"/>
</dbReference>
<dbReference type="RefSeq" id="WP_011750719.1">
    <property type="nucleotide sequence ID" value="NC_008687.1"/>
</dbReference>
<dbReference type="SMR" id="A1BAL4"/>
<dbReference type="STRING" id="318586.Pden_4494"/>
<dbReference type="EnsemblBacteria" id="ABL72558">
    <property type="protein sequence ID" value="ABL72558"/>
    <property type="gene ID" value="Pden_4494"/>
</dbReference>
<dbReference type="GeneID" id="93454160"/>
<dbReference type="KEGG" id="pde:Pden_4494"/>
<dbReference type="eggNOG" id="COG0773">
    <property type="taxonomic scope" value="Bacteria"/>
</dbReference>
<dbReference type="HOGENOM" id="CLU_028104_2_2_5"/>
<dbReference type="OrthoDB" id="9804126at2"/>
<dbReference type="UniPathway" id="UPA00219"/>
<dbReference type="Proteomes" id="UP000000361">
    <property type="component" value="Chromosome 2"/>
</dbReference>
<dbReference type="GO" id="GO:0005737">
    <property type="term" value="C:cytoplasm"/>
    <property type="evidence" value="ECO:0007669"/>
    <property type="project" value="UniProtKB-SubCell"/>
</dbReference>
<dbReference type="GO" id="GO:0005524">
    <property type="term" value="F:ATP binding"/>
    <property type="evidence" value="ECO:0007669"/>
    <property type="project" value="UniProtKB-UniRule"/>
</dbReference>
<dbReference type="GO" id="GO:0008763">
    <property type="term" value="F:UDP-N-acetylmuramate-L-alanine ligase activity"/>
    <property type="evidence" value="ECO:0007669"/>
    <property type="project" value="UniProtKB-UniRule"/>
</dbReference>
<dbReference type="GO" id="GO:0051301">
    <property type="term" value="P:cell division"/>
    <property type="evidence" value="ECO:0007669"/>
    <property type="project" value="UniProtKB-KW"/>
</dbReference>
<dbReference type="GO" id="GO:0071555">
    <property type="term" value="P:cell wall organization"/>
    <property type="evidence" value="ECO:0007669"/>
    <property type="project" value="UniProtKB-KW"/>
</dbReference>
<dbReference type="GO" id="GO:0009252">
    <property type="term" value="P:peptidoglycan biosynthetic process"/>
    <property type="evidence" value="ECO:0007669"/>
    <property type="project" value="UniProtKB-UniRule"/>
</dbReference>
<dbReference type="GO" id="GO:0008360">
    <property type="term" value="P:regulation of cell shape"/>
    <property type="evidence" value="ECO:0007669"/>
    <property type="project" value="UniProtKB-KW"/>
</dbReference>
<dbReference type="Gene3D" id="3.90.190.20">
    <property type="entry name" value="Mur ligase, C-terminal domain"/>
    <property type="match status" value="1"/>
</dbReference>
<dbReference type="Gene3D" id="3.40.1190.10">
    <property type="entry name" value="Mur-like, catalytic domain"/>
    <property type="match status" value="1"/>
</dbReference>
<dbReference type="Gene3D" id="3.40.50.720">
    <property type="entry name" value="NAD(P)-binding Rossmann-like Domain"/>
    <property type="match status" value="1"/>
</dbReference>
<dbReference type="HAMAP" id="MF_00046">
    <property type="entry name" value="MurC"/>
    <property type="match status" value="1"/>
</dbReference>
<dbReference type="InterPro" id="IPR036565">
    <property type="entry name" value="Mur-like_cat_sf"/>
</dbReference>
<dbReference type="InterPro" id="IPR004101">
    <property type="entry name" value="Mur_ligase_C"/>
</dbReference>
<dbReference type="InterPro" id="IPR036615">
    <property type="entry name" value="Mur_ligase_C_dom_sf"/>
</dbReference>
<dbReference type="InterPro" id="IPR013221">
    <property type="entry name" value="Mur_ligase_cen"/>
</dbReference>
<dbReference type="InterPro" id="IPR000713">
    <property type="entry name" value="Mur_ligase_N"/>
</dbReference>
<dbReference type="InterPro" id="IPR050061">
    <property type="entry name" value="MurCDEF_pg_biosynth"/>
</dbReference>
<dbReference type="InterPro" id="IPR005758">
    <property type="entry name" value="UDP-N-AcMur_Ala_ligase_MurC"/>
</dbReference>
<dbReference type="NCBIfam" id="TIGR01082">
    <property type="entry name" value="murC"/>
    <property type="match status" value="1"/>
</dbReference>
<dbReference type="PANTHER" id="PTHR43445:SF3">
    <property type="entry name" value="UDP-N-ACETYLMURAMATE--L-ALANINE LIGASE"/>
    <property type="match status" value="1"/>
</dbReference>
<dbReference type="PANTHER" id="PTHR43445">
    <property type="entry name" value="UDP-N-ACETYLMURAMATE--L-ALANINE LIGASE-RELATED"/>
    <property type="match status" value="1"/>
</dbReference>
<dbReference type="Pfam" id="PF01225">
    <property type="entry name" value="Mur_ligase"/>
    <property type="match status" value="1"/>
</dbReference>
<dbReference type="Pfam" id="PF02875">
    <property type="entry name" value="Mur_ligase_C"/>
    <property type="match status" value="1"/>
</dbReference>
<dbReference type="Pfam" id="PF08245">
    <property type="entry name" value="Mur_ligase_M"/>
    <property type="match status" value="1"/>
</dbReference>
<dbReference type="SUPFAM" id="SSF51984">
    <property type="entry name" value="MurCD N-terminal domain"/>
    <property type="match status" value="1"/>
</dbReference>
<dbReference type="SUPFAM" id="SSF53623">
    <property type="entry name" value="MurD-like peptide ligases, catalytic domain"/>
    <property type="match status" value="1"/>
</dbReference>
<dbReference type="SUPFAM" id="SSF53244">
    <property type="entry name" value="MurD-like peptide ligases, peptide-binding domain"/>
    <property type="match status" value="1"/>
</dbReference>
<name>MURC_PARDP</name>
<gene>
    <name evidence="1" type="primary">murC</name>
    <name type="ordered locus">Pden_4494</name>
</gene>
<proteinExistence type="inferred from homology"/>
<comment type="function">
    <text evidence="1">Cell wall formation.</text>
</comment>
<comment type="catalytic activity">
    <reaction evidence="1">
        <text>UDP-N-acetyl-alpha-D-muramate + L-alanine + ATP = UDP-N-acetyl-alpha-D-muramoyl-L-alanine + ADP + phosphate + H(+)</text>
        <dbReference type="Rhea" id="RHEA:23372"/>
        <dbReference type="ChEBI" id="CHEBI:15378"/>
        <dbReference type="ChEBI" id="CHEBI:30616"/>
        <dbReference type="ChEBI" id="CHEBI:43474"/>
        <dbReference type="ChEBI" id="CHEBI:57972"/>
        <dbReference type="ChEBI" id="CHEBI:70757"/>
        <dbReference type="ChEBI" id="CHEBI:83898"/>
        <dbReference type="ChEBI" id="CHEBI:456216"/>
        <dbReference type="EC" id="6.3.2.8"/>
    </reaction>
</comment>
<comment type="pathway">
    <text evidence="1">Cell wall biogenesis; peptidoglycan biosynthesis.</text>
</comment>
<comment type="subcellular location">
    <subcellularLocation>
        <location evidence="1">Cytoplasm</location>
    </subcellularLocation>
</comment>
<comment type="similarity">
    <text evidence="1">Belongs to the MurCDEF family.</text>
</comment>
<reference key="1">
    <citation type="submission" date="2006-12" db="EMBL/GenBank/DDBJ databases">
        <title>Complete sequence of chromosome 2 of Paracoccus denitrificans PD1222.</title>
        <authorList>
            <person name="Copeland A."/>
            <person name="Lucas S."/>
            <person name="Lapidus A."/>
            <person name="Barry K."/>
            <person name="Detter J.C."/>
            <person name="Glavina del Rio T."/>
            <person name="Hammon N."/>
            <person name="Israni S."/>
            <person name="Dalin E."/>
            <person name="Tice H."/>
            <person name="Pitluck S."/>
            <person name="Munk A.C."/>
            <person name="Brettin T."/>
            <person name="Bruce D."/>
            <person name="Han C."/>
            <person name="Tapia R."/>
            <person name="Gilna P."/>
            <person name="Schmutz J."/>
            <person name="Larimer F."/>
            <person name="Land M."/>
            <person name="Hauser L."/>
            <person name="Kyrpides N."/>
            <person name="Lykidis A."/>
            <person name="Spiro S."/>
            <person name="Richardson D.J."/>
            <person name="Moir J.W.B."/>
            <person name="Ferguson S.J."/>
            <person name="van Spanning R.J.M."/>
            <person name="Richardson P."/>
        </authorList>
    </citation>
    <scope>NUCLEOTIDE SEQUENCE [LARGE SCALE GENOMIC DNA]</scope>
    <source>
        <strain>Pd 1222</strain>
    </source>
</reference>
<sequence length="475" mass="50865">MNAATKLPGELGPIHFVGIGGIGMSGIAEVLMTLGYQVQGSDAKRSKITDRLQTLGATIFEGQRAENIGEAGVVVISTAIKKGNPELEEARRRGLPVVRRAEMLAELMRLKSNVAIAGTHGKTTTTTMVATLLDAGGFDPTVINGGVIHAYGSNARAGAGEWMVVEADESDGSFNRLPATIAIVTNIDPEHMEHWGSFDALRKGFQDFVSNIPFYGLAVCCTDHPEVQSLVGRLTDRRVATFGFNAQADVRAINLRYENGVAHFDIALQGEAELNEGEVPVIEGCTLPMPGDHNVSNALAAVAVARHLGMKRAQIREALARFGGVSRRFTRVGEVDGVTIIDDYGHHPVEIAAVLKAARQATKGRVIAVHQPHRYSRLSSLFDDFCTCFNEADVVAIAEVYSAGEEPIPGASRDDLVAGLIAHGHRHARAVMDEGDLERLVREQARPGDMVVCLGAGTISAWANNLPERLTEKAA</sequence>
<protein>
    <recommendedName>
        <fullName evidence="1">UDP-N-acetylmuramate--L-alanine ligase</fullName>
        <ecNumber evidence="1">6.3.2.8</ecNumber>
    </recommendedName>
    <alternativeName>
        <fullName evidence="1">UDP-N-acetylmuramoyl-L-alanine synthetase</fullName>
    </alternativeName>
</protein>
<accession>A1BAL4</accession>